<name>LZIC_XENTR</name>
<gene>
    <name type="primary">lzic</name>
    <name type="ORF">TGas113e03.1</name>
</gene>
<feature type="chain" id="PRO_0000263696" description="Protein LZIC">
    <location>
        <begin position="1"/>
        <end position="190"/>
    </location>
</feature>
<feature type="coiled-coil region" evidence="1">
    <location>
        <begin position="3"/>
        <end position="63"/>
    </location>
</feature>
<evidence type="ECO:0000255" key="1"/>
<evidence type="ECO:0000305" key="2"/>
<sequence>MASRGKSETIKLRQNLEEQLDRLMQQLQDLEECREELDGDEYEETKKETLEQLSEFNDSLKKIMSGNMTLIDELGGMQLAIQAAISQAFKTPEVIRMFAKKQPGQLRTRLAELDRDLMVGKLGRDLYTQQKGEILIALQKLGEKLSPEDEAFLSENAGAVFNQFQKVSEGLGSGDKVLALASIEVENTRK</sequence>
<reference key="1">
    <citation type="submission" date="2006-10" db="EMBL/GenBank/DDBJ databases">
        <authorList>
            <consortium name="Sanger Xenopus tropicalis EST/cDNA project"/>
        </authorList>
    </citation>
    <scope>NUCLEOTIDE SEQUENCE [LARGE SCALE MRNA]</scope>
    <source>
        <tissue>Gastrula</tissue>
    </source>
</reference>
<reference key="2">
    <citation type="submission" date="2007-03" db="EMBL/GenBank/DDBJ databases">
        <authorList>
            <consortium name="NIH - Xenopus Gene Collection (XGC) project"/>
        </authorList>
    </citation>
    <scope>NUCLEOTIDE SEQUENCE [LARGE SCALE MRNA]</scope>
    <source>
        <tissue>Embryo</tissue>
    </source>
</reference>
<reference key="3">
    <citation type="journal article" date="2005" name="Dev. Biol.">
        <title>LZIC regulates neuronal survival during zebrafish development.</title>
        <authorList>
            <person name="Clements W.K."/>
            <person name="Kimelman D."/>
        </authorList>
    </citation>
    <scope>IDENTIFICATION</scope>
</reference>
<keyword id="KW-0175">Coiled coil</keyword>
<keyword id="KW-1185">Reference proteome</keyword>
<dbReference type="EMBL" id="CR855656">
    <property type="protein sequence ID" value="CAJ83399.1"/>
    <property type="molecule type" value="mRNA"/>
</dbReference>
<dbReference type="EMBL" id="BC135363">
    <property type="protein sequence ID" value="AAI35364.1"/>
    <property type="molecule type" value="mRNA"/>
</dbReference>
<dbReference type="RefSeq" id="NP_001017291.1">
    <property type="nucleotide sequence ID" value="NM_001017291.3"/>
</dbReference>
<dbReference type="RefSeq" id="XP_012822113.1">
    <property type="nucleotide sequence ID" value="XM_012966659.3"/>
</dbReference>
<dbReference type="RefSeq" id="XP_012822114.1">
    <property type="nucleotide sequence ID" value="XM_012966660.3"/>
</dbReference>
<dbReference type="RefSeq" id="XP_012822115.1">
    <property type="nucleotide sequence ID" value="XM_012966661.3"/>
</dbReference>
<dbReference type="SMR" id="Q28D79"/>
<dbReference type="FunCoup" id="Q28D79">
    <property type="interactions" value="1888"/>
</dbReference>
<dbReference type="STRING" id="8364.ENSXETP00000035810"/>
<dbReference type="PaxDb" id="8364-ENSXETP00000047916"/>
<dbReference type="DNASU" id="550045"/>
<dbReference type="GeneID" id="550045"/>
<dbReference type="KEGG" id="xtr:550045"/>
<dbReference type="AGR" id="Xenbase:XB-GENE-1016608"/>
<dbReference type="CTD" id="84328"/>
<dbReference type="Xenbase" id="XB-GENE-1016608">
    <property type="gene designation" value="lzic"/>
</dbReference>
<dbReference type="eggNOG" id="ENOG502QPUB">
    <property type="taxonomic scope" value="Eukaryota"/>
</dbReference>
<dbReference type="HOGENOM" id="CLU_091171_0_0_1"/>
<dbReference type="InParanoid" id="Q28D79"/>
<dbReference type="OMA" id="TKMMAGN"/>
<dbReference type="OrthoDB" id="10262856at2759"/>
<dbReference type="PhylomeDB" id="Q28D79"/>
<dbReference type="TreeFam" id="TF314533"/>
<dbReference type="Proteomes" id="UP000008143">
    <property type="component" value="Chromosome 7"/>
</dbReference>
<dbReference type="Bgee" id="ENSXETG00000022153">
    <property type="expression patterns" value="Expressed in testis and 13 other cell types or tissues"/>
</dbReference>
<dbReference type="GO" id="GO:0008013">
    <property type="term" value="F:beta-catenin binding"/>
    <property type="evidence" value="ECO:0007669"/>
    <property type="project" value="InterPro"/>
</dbReference>
<dbReference type="Gene3D" id="1.10.10.490">
    <property type="entry name" value="Beta-catenin-interacting ICAT"/>
    <property type="match status" value="1"/>
</dbReference>
<dbReference type="InterPro" id="IPR009428">
    <property type="entry name" value="ICAT_dom"/>
</dbReference>
<dbReference type="InterPro" id="IPR036911">
    <property type="entry name" value="ICAT_sf"/>
</dbReference>
<dbReference type="InterPro" id="IPR040065">
    <property type="entry name" value="LZIC"/>
</dbReference>
<dbReference type="PANTHER" id="PTHR16505">
    <property type="entry name" value="PROTEIN LZIC"/>
    <property type="match status" value="1"/>
</dbReference>
<dbReference type="PANTHER" id="PTHR16505:SF8">
    <property type="entry name" value="PROTEIN LZIC"/>
    <property type="match status" value="1"/>
</dbReference>
<dbReference type="Pfam" id="PF06384">
    <property type="entry name" value="ICAT"/>
    <property type="match status" value="1"/>
</dbReference>
<dbReference type="SUPFAM" id="SSF81730">
    <property type="entry name" value="beta-catenin-interacting protein ICAT"/>
    <property type="match status" value="1"/>
</dbReference>
<protein>
    <recommendedName>
        <fullName>Protein LZIC</fullName>
    </recommendedName>
    <alternativeName>
        <fullName>Leucine zipper and CTNNBIP1 domain-containing protein</fullName>
    </alternativeName>
    <alternativeName>
        <fullName>Leucine zipper and ICAT homologous domain-containing protein</fullName>
    </alternativeName>
</protein>
<proteinExistence type="evidence at transcript level"/>
<organism>
    <name type="scientific">Xenopus tropicalis</name>
    <name type="common">Western clawed frog</name>
    <name type="synonym">Silurana tropicalis</name>
    <dbReference type="NCBI Taxonomy" id="8364"/>
    <lineage>
        <taxon>Eukaryota</taxon>
        <taxon>Metazoa</taxon>
        <taxon>Chordata</taxon>
        <taxon>Craniata</taxon>
        <taxon>Vertebrata</taxon>
        <taxon>Euteleostomi</taxon>
        <taxon>Amphibia</taxon>
        <taxon>Batrachia</taxon>
        <taxon>Anura</taxon>
        <taxon>Pipoidea</taxon>
        <taxon>Pipidae</taxon>
        <taxon>Xenopodinae</taxon>
        <taxon>Xenopus</taxon>
        <taxon>Silurana</taxon>
    </lineage>
</organism>
<comment type="similarity">
    <text evidence="2">Belongs to the CTNNBIP1 family.</text>
</comment>
<accession>Q28D79</accession>
<accession>A4IH40</accession>